<proteinExistence type="inferred from homology"/>
<reference key="1">
    <citation type="journal article" date="2000" name="Nature">
        <title>DNA sequence of both chromosomes of the cholera pathogen Vibrio cholerae.</title>
        <authorList>
            <person name="Heidelberg J.F."/>
            <person name="Eisen J.A."/>
            <person name="Nelson W.C."/>
            <person name="Clayton R.A."/>
            <person name="Gwinn M.L."/>
            <person name="Dodson R.J."/>
            <person name="Haft D.H."/>
            <person name="Hickey E.K."/>
            <person name="Peterson J.D."/>
            <person name="Umayam L.A."/>
            <person name="Gill S.R."/>
            <person name="Nelson K.E."/>
            <person name="Read T.D."/>
            <person name="Tettelin H."/>
            <person name="Richardson D.L."/>
            <person name="Ermolaeva M.D."/>
            <person name="Vamathevan J.J."/>
            <person name="Bass S."/>
            <person name="Qin H."/>
            <person name="Dragoi I."/>
            <person name="Sellers P."/>
            <person name="McDonald L.A."/>
            <person name="Utterback T.R."/>
            <person name="Fleischmann R.D."/>
            <person name="Nierman W.C."/>
            <person name="White O."/>
            <person name="Salzberg S.L."/>
            <person name="Smith H.O."/>
            <person name="Colwell R.R."/>
            <person name="Mekalanos J.J."/>
            <person name="Venter J.C."/>
            <person name="Fraser C.M."/>
        </authorList>
    </citation>
    <scope>NUCLEOTIDE SEQUENCE [LARGE SCALE GENOMIC DNA]</scope>
    <source>
        <strain>ATCC 39315 / El Tor Inaba N16961</strain>
    </source>
</reference>
<organism>
    <name type="scientific">Vibrio cholerae serotype O1 (strain ATCC 39315 / El Tor Inaba N16961)</name>
    <dbReference type="NCBI Taxonomy" id="243277"/>
    <lineage>
        <taxon>Bacteria</taxon>
        <taxon>Pseudomonadati</taxon>
        <taxon>Pseudomonadota</taxon>
        <taxon>Gammaproteobacteria</taxon>
        <taxon>Vibrionales</taxon>
        <taxon>Vibrionaceae</taxon>
        <taxon>Vibrio</taxon>
    </lineage>
</organism>
<keyword id="KW-0004">4Fe-4S</keyword>
<keyword id="KW-0963">Cytoplasm</keyword>
<keyword id="KW-0408">Iron</keyword>
<keyword id="KW-0411">Iron-sulfur</keyword>
<keyword id="KW-0479">Metal-binding</keyword>
<keyword id="KW-0560">Oxidoreductase</keyword>
<keyword id="KW-0671">Queuosine biosynthesis</keyword>
<keyword id="KW-1185">Reference proteome</keyword>
<keyword id="KW-0819">tRNA processing</keyword>
<comment type="function">
    <text evidence="1">Catalyzes the conversion of epoxyqueuosine (oQ) to queuosine (Q), which is a hypermodified base found in the wobble positions of tRNA(Asp), tRNA(Asn), tRNA(His) and tRNA(Tyr).</text>
</comment>
<comment type="catalytic activity">
    <reaction evidence="1">
        <text>epoxyqueuosine(34) in tRNA + AH2 = queuosine(34) in tRNA + A + H2O</text>
        <dbReference type="Rhea" id="RHEA:32159"/>
        <dbReference type="Rhea" id="RHEA-COMP:18571"/>
        <dbReference type="Rhea" id="RHEA-COMP:18582"/>
        <dbReference type="ChEBI" id="CHEBI:13193"/>
        <dbReference type="ChEBI" id="CHEBI:15377"/>
        <dbReference type="ChEBI" id="CHEBI:17499"/>
        <dbReference type="ChEBI" id="CHEBI:194431"/>
        <dbReference type="ChEBI" id="CHEBI:194443"/>
        <dbReference type="EC" id="1.17.99.6"/>
    </reaction>
</comment>
<comment type="cofactor">
    <cofactor evidence="1">
        <name>cob(II)alamin</name>
        <dbReference type="ChEBI" id="CHEBI:16304"/>
    </cofactor>
</comment>
<comment type="cofactor">
    <cofactor evidence="1">
        <name>[4Fe-4S] cluster</name>
        <dbReference type="ChEBI" id="CHEBI:49883"/>
    </cofactor>
    <text evidence="1">Binds 2 [4Fe-4S] clusters per monomer.</text>
</comment>
<comment type="pathway">
    <text evidence="1">tRNA modification; tRNA-queuosine biosynthesis.</text>
</comment>
<comment type="subunit">
    <text evidence="1">Monomer.</text>
</comment>
<comment type="subcellular location">
    <subcellularLocation>
        <location evidence="1">Cytoplasm</location>
    </subcellularLocation>
</comment>
<comment type="similarity">
    <text evidence="1">Belongs to the QueG family.</text>
</comment>
<feature type="chain" id="PRO_0000416087" description="Epoxyqueuosine reductase">
    <location>
        <begin position="1"/>
        <end position="369"/>
    </location>
</feature>
<feature type="domain" description="4Fe-4S ferredoxin-type" evidence="1">
    <location>
        <begin position="177"/>
        <end position="209"/>
    </location>
</feature>
<feature type="active site" description="Proton donor" evidence="1">
    <location>
        <position position="135"/>
    </location>
</feature>
<feature type="binding site" evidence="1">
    <location>
        <position position="189"/>
    </location>
    <ligand>
        <name>[4Fe-4S] cluster</name>
        <dbReference type="ChEBI" id="CHEBI:49883"/>
        <label>1</label>
    </ligand>
</feature>
<feature type="binding site" evidence="1">
    <location>
        <position position="192"/>
    </location>
    <ligand>
        <name>[4Fe-4S] cluster</name>
        <dbReference type="ChEBI" id="CHEBI:49883"/>
        <label>1</label>
    </ligand>
</feature>
<feature type="binding site" evidence="1">
    <location>
        <position position="195"/>
    </location>
    <ligand>
        <name>[4Fe-4S] cluster</name>
        <dbReference type="ChEBI" id="CHEBI:49883"/>
        <label>1</label>
    </ligand>
</feature>
<feature type="binding site" evidence="1">
    <location>
        <position position="199"/>
    </location>
    <ligand>
        <name>[4Fe-4S] cluster</name>
        <dbReference type="ChEBI" id="CHEBI:49883"/>
        <label>2</label>
    </ligand>
</feature>
<feature type="binding site" evidence="1">
    <location>
        <position position="215"/>
    </location>
    <ligand>
        <name>[4Fe-4S] cluster</name>
        <dbReference type="ChEBI" id="CHEBI:49883"/>
        <label>2</label>
    </ligand>
</feature>
<feature type="binding site" evidence="1">
    <location>
        <position position="242"/>
    </location>
    <ligand>
        <name>[4Fe-4S] cluster</name>
        <dbReference type="ChEBI" id="CHEBI:49883"/>
        <label>2</label>
    </ligand>
</feature>
<feature type="binding site" evidence="1">
    <location>
        <position position="245"/>
    </location>
    <ligand>
        <name>[4Fe-4S] cluster</name>
        <dbReference type="ChEBI" id="CHEBI:49883"/>
        <label>2</label>
    </ligand>
</feature>
<feature type="binding site" evidence="1">
    <location>
        <position position="249"/>
    </location>
    <ligand>
        <name>[4Fe-4S] cluster</name>
        <dbReference type="ChEBI" id="CHEBI:49883"/>
        <label>1</label>
    </ligand>
</feature>
<gene>
    <name evidence="1" type="primary">queG</name>
    <name type="ordered locus">VC_0342</name>
</gene>
<accession>Q9KV16</accession>
<name>QUEG_VIBCH</name>
<protein>
    <recommendedName>
        <fullName evidence="1">Epoxyqueuosine reductase</fullName>
        <ecNumber evidence="1">1.17.99.6</ecNumber>
    </recommendedName>
    <alternativeName>
        <fullName evidence="1">Queuosine biosynthesis protein QueG</fullName>
    </alternativeName>
</protein>
<sequence>MDYQQLANQIKQWAIELGFEKVGICDVDLSEHEPALQAWLDAGYHGEMDWMARHGMMRARPAELLPGTLRVISARINYLPPQAQFASNLSDPNQAYISRYALGRDYHKLVRNQLKKLGEKIEQEVGKLGYRPFVDSAPILERPLAQKAGLGWTGKHSLILDKENGSWFFLGELLVDIPLPVDEPSENQCGKCTACITSCPTNAIVAEGVVDARRCVSYLTIEYSGVIPLEFRRAMGNRIYGCDDCQLVCPWNRFAPLTQQSDFHRRQSLNNADLVVLFEWDEATFLKNMEGSAIRRIGHQQWRRNLIIAMGNAPYSPRIIDTLQRHLGQSELLDEHIHWALEEQTQKTATPRQHARLIRIIEKGLPRDA</sequence>
<evidence type="ECO:0000255" key="1">
    <source>
        <dbReference type="HAMAP-Rule" id="MF_00916"/>
    </source>
</evidence>
<dbReference type="EC" id="1.17.99.6" evidence="1"/>
<dbReference type="EMBL" id="AE003852">
    <property type="protein sequence ID" value="AAF93515.1"/>
    <property type="molecule type" value="Genomic_DNA"/>
</dbReference>
<dbReference type="PIR" id="F82333">
    <property type="entry name" value="F82333"/>
</dbReference>
<dbReference type="RefSeq" id="NP_229996.1">
    <property type="nucleotide sequence ID" value="NC_002505.1"/>
</dbReference>
<dbReference type="RefSeq" id="WP_000386325.1">
    <property type="nucleotide sequence ID" value="NZ_LT906614.1"/>
</dbReference>
<dbReference type="SMR" id="Q9KV16"/>
<dbReference type="STRING" id="243277.VC_0342"/>
<dbReference type="DNASU" id="2615055"/>
<dbReference type="EnsemblBacteria" id="AAF93515">
    <property type="protein sequence ID" value="AAF93515"/>
    <property type="gene ID" value="VC_0342"/>
</dbReference>
<dbReference type="KEGG" id="vch:VC_0342"/>
<dbReference type="PATRIC" id="fig|243277.26.peg.319"/>
<dbReference type="eggNOG" id="COG1600">
    <property type="taxonomic scope" value="Bacteria"/>
</dbReference>
<dbReference type="HOGENOM" id="CLU_030790_0_1_6"/>
<dbReference type="UniPathway" id="UPA00392"/>
<dbReference type="Proteomes" id="UP000000584">
    <property type="component" value="Chromosome 1"/>
</dbReference>
<dbReference type="GO" id="GO:0005737">
    <property type="term" value="C:cytoplasm"/>
    <property type="evidence" value="ECO:0007669"/>
    <property type="project" value="UniProtKB-SubCell"/>
</dbReference>
<dbReference type="GO" id="GO:0051539">
    <property type="term" value="F:4 iron, 4 sulfur cluster binding"/>
    <property type="evidence" value="ECO:0007669"/>
    <property type="project" value="UniProtKB-KW"/>
</dbReference>
<dbReference type="GO" id="GO:0052693">
    <property type="term" value="F:epoxyqueuosine reductase activity"/>
    <property type="evidence" value="ECO:0000318"/>
    <property type="project" value="GO_Central"/>
</dbReference>
<dbReference type="GO" id="GO:0046872">
    <property type="term" value="F:metal ion binding"/>
    <property type="evidence" value="ECO:0007669"/>
    <property type="project" value="UniProtKB-KW"/>
</dbReference>
<dbReference type="GO" id="GO:0008616">
    <property type="term" value="P:queuosine biosynthetic process"/>
    <property type="evidence" value="ECO:0000318"/>
    <property type="project" value="GO_Central"/>
</dbReference>
<dbReference type="GO" id="GO:0006400">
    <property type="term" value="P:tRNA modification"/>
    <property type="evidence" value="ECO:0007669"/>
    <property type="project" value="UniProtKB-UniRule"/>
</dbReference>
<dbReference type="FunFam" id="3.30.70.20:FF:000017">
    <property type="entry name" value="Epoxyqueuosine reductase"/>
    <property type="match status" value="1"/>
</dbReference>
<dbReference type="Gene3D" id="3.30.70.20">
    <property type="match status" value="1"/>
</dbReference>
<dbReference type="HAMAP" id="MF_00916">
    <property type="entry name" value="QueG"/>
    <property type="match status" value="1"/>
</dbReference>
<dbReference type="InterPro" id="IPR017896">
    <property type="entry name" value="4Fe4S_Fe-S-bd"/>
</dbReference>
<dbReference type="InterPro" id="IPR017900">
    <property type="entry name" value="4Fe4S_Fe_S_CS"/>
</dbReference>
<dbReference type="InterPro" id="IPR004453">
    <property type="entry name" value="QueG"/>
</dbReference>
<dbReference type="InterPro" id="IPR013542">
    <property type="entry name" value="QueG_DUF1730"/>
</dbReference>
<dbReference type="NCBIfam" id="TIGR00276">
    <property type="entry name" value="tRNA epoxyqueuosine(34) reductase QueG"/>
    <property type="match status" value="1"/>
</dbReference>
<dbReference type="PANTHER" id="PTHR30002">
    <property type="entry name" value="EPOXYQUEUOSINE REDUCTASE"/>
    <property type="match status" value="1"/>
</dbReference>
<dbReference type="PANTHER" id="PTHR30002:SF4">
    <property type="entry name" value="EPOXYQUEUOSINE REDUCTASE"/>
    <property type="match status" value="1"/>
</dbReference>
<dbReference type="Pfam" id="PF13484">
    <property type="entry name" value="Fer4_16"/>
    <property type="match status" value="1"/>
</dbReference>
<dbReference type="Pfam" id="PF08331">
    <property type="entry name" value="QueG_DUF1730"/>
    <property type="match status" value="1"/>
</dbReference>
<dbReference type="SUPFAM" id="SSF54862">
    <property type="entry name" value="4Fe-4S ferredoxins"/>
    <property type="match status" value="1"/>
</dbReference>
<dbReference type="PROSITE" id="PS00198">
    <property type="entry name" value="4FE4S_FER_1"/>
    <property type="match status" value="1"/>
</dbReference>
<dbReference type="PROSITE" id="PS51379">
    <property type="entry name" value="4FE4S_FER_2"/>
    <property type="match status" value="1"/>
</dbReference>